<evidence type="ECO:0000250" key="1">
    <source>
        <dbReference type="UniProtKB" id="P82271"/>
    </source>
</evidence>
<evidence type="ECO:0000255" key="2"/>
<evidence type="ECO:0000256" key="3">
    <source>
        <dbReference type="SAM" id="MobiDB-lite"/>
    </source>
</evidence>
<evidence type="ECO:0000269" key="4">
    <source>
    </source>
</evidence>
<evidence type="ECO:0000269" key="5">
    <source>
    </source>
</evidence>
<evidence type="ECO:0000303" key="6">
    <source>
    </source>
</evidence>
<evidence type="ECO:0000305" key="7"/>
<evidence type="ECO:0000312" key="8">
    <source>
        <dbReference type="EMBL" id="ACJ12914.1"/>
    </source>
</evidence>
<accession>B6ULW5</accession>
<accession>P86032</accession>
<name>BTDB_PAPAN</name>
<proteinExistence type="evidence at protein level"/>
<organism>
    <name type="scientific">Papio anubis</name>
    <name type="common">Olive baboon</name>
    <dbReference type="NCBI Taxonomy" id="9555"/>
    <lineage>
        <taxon>Eukaryota</taxon>
        <taxon>Metazoa</taxon>
        <taxon>Chordata</taxon>
        <taxon>Craniata</taxon>
        <taxon>Vertebrata</taxon>
        <taxon>Euteleostomi</taxon>
        <taxon>Mammalia</taxon>
        <taxon>Eutheria</taxon>
        <taxon>Euarchontoglires</taxon>
        <taxon>Primates</taxon>
        <taxon>Haplorrhini</taxon>
        <taxon>Catarrhini</taxon>
        <taxon>Cercopithecidae</taxon>
        <taxon>Cercopithecinae</taxon>
        <taxon>Papio</taxon>
    </lineage>
</organism>
<dbReference type="EMBL" id="FJ030940">
    <property type="protein sequence ID" value="ACJ12914.1"/>
    <property type="molecule type" value="mRNA"/>
</dbReference>
<dbReference type="RefSeq" id="NP_001135412.1">
    <property type="nucleotide sequence ID" value="NM_001141940.1"/>
</dbReference>
<dbReference type="PDB" id="2LYE">
    <property type="method" value="NMR"/>
    <property type="chains" value="A=65-73"/>
</dbReference>
<dbReference type="PDBsum" id="2LYE"/>
<dbReference type="GeneID" id="100196941"/>
<dbReference type="KEGG" id="panu:100196941"/>
<dbReference type="CTD" id="100196941"/>
<dbReference type="Proteomes" id="UP000028761">
    <property type="component" value="Unplaced"/>
</dbReference>
<dbReference type="GO" id="GO:0031012">
    <property type="term" value="C:extracellular matrix"/>
    <property type="evidence" value="ECO:0007669"/>
    <property type="project" value="TreeGrafter"/>
</dbReference>
<dbReference type="GO" id="GO:0005615">
    <property type="term" value="C:extracellular space"/>
    <property type="evidence" value="ECO:0007669"/>
    <property type="project" value="InterPro"/>
</dbReference>
<dbReference type="GO" id="GO:0019731">
    <property type="term" value="P:antibacterial humoral response"/>
    <property type="evidence" value="ECO:0007669"/>
    <property type="project" value="TreeGrafter"/>
</dbReference>
<dbReference type="GO" id="GO:0061844">
    <property type="term" value="P:antimicrobial humoral immune response mediated by antimicrobial peptide"/>
    <property type="evidence" value="ECO:0007669"/>
    <property type="project" value="TreeGrafter"/>
</dbReference>
<dbReference type="GO" id="GO:0071222">
    <property type="term" value="P:cellular response to lipopolysaccharide"/>
    <property type="evidence" value="ECO:0007669"/>
    <property type="project" value="TreeGrafter"/>
</dbReference>
<dbReference type="GO" id="GO:0050832">
    <property type="term" value="P:defense response to fungus"/>
    <property type="evidence" value="ECO:0007669"/>
    <property type="project" value="UniProtKB-KW"/>
</dbReference>
<dbReference type="GO" id="GO:0050829">
    <property type="term" value="P:defense response to Gram-negative bacterium"/>
    <property type="evidence" value="ECO:0007669"/>
    <property type="project" value="TreeGrafter"/>
</dbReference>
<dbReference type="GO" id="GO:0050830">
    <property type="term" value="P:defense response to Gram-positive bacterium"/>
    <property type="evidence" value="ECO:0007669"/>
    <property type="project" value="TreeGrafter"/>
</dbReference>
<dbReference type="GO" id="GO:0051673">
    <property type="term" value="P:disruption of plasma membrane integrity in another organism"/>
    <property type="evidence" value="ECO:0007669"/>
    <property type="project" value="TreeGrafter"/>
</dbReference>
<dbReference type="GO" id="GO:0002227">
    <property type="term" value="P:innate immune response in mucosa"/>
    <property type="evidence" value="ECO:0007669"/>
    <property type="project" value="TreeGrafter"/>
</dbReference>
<dbReference type="GO" id="GO:0031640">
    <property type="term" value="P:killing of cells of another organism"/>
    <property type="evidence" value="ECO:0007669"/>
    <property type="project" value="UniProtKB-KW"/>
</dbReference>
<dbReference type="InterPro" id="IPR016327">
    <property type="entry name" value="Alpha-defensin"/>
</dbReference>
<dbReference type="InterPro" id="IPR002366">
    <property type="entry name" value="Alpha-defensin_N"/>
</dbReference>
<dbReference type="PANTHER" id="PTHR11876">
    <property type="entry name" value="ALPHA-DEFENSIN 1"/>
    <property type="match status" value="1"/>
</dbReference>
<dbReference type="PANTHER" id="PTHR11876:SF34">
    <property type="entry name" value="DEMIDEFENSIN-3"/>
    <property type="match status" value="1"/>
</dbReference>
<dbReference type="Pfam" id="PF00879">
    <property type="entry name" value="Defensin_propep"/>
    <property type="match status" value="1"/>
</dbReference>
<dbReference type="PIRSF" id="PIRSF001875">
    <property type="entry name" value="Alpha-defensin"/>
    <property type="match status" value="1"/>
</dbReference>
<dbReference type="SMART" id="SM01418">
    <property type="entry name" value="Defensin_propep"/>
    <property type="match status" value="1"/>
</dbReference>
<protein>
    <recommendedName>
        <fullName>Theta defensin subunit B</fullName>
        <shortName evidence="6">BTD-b</shortName>
    </recommendedName>
    <alternativeName>
        <fullName>BTD-1 subunit 2</fullName>
    </alternativeName>
    <alternativeName>
        <fullName>BTD-2</fullName>
    </alternativeName>
</protein>
<sequence length="76" mass="8164">MRTFALLTAMLLLVALQPQAEARQARADEAAAQQQPGADDQGMAHSFTRPENAALPLSESAKGLRCVCRRGVCQLL</sequence>
<comment type="function">
    <text evidence="4">BTD-1 and BTD-2 have antimicrobial activity against the Gram-negative bacterium E.coli ML35, the Gram-positive bacterium S.aureus 502a, and the fungus C.albicans 16820. BTD-2 is more effective against E.coli than BTD-1.</text>
</comment>
<comment type="subunit">
    <text evidence="4 5">BTD-1 is a cyclic heterodimer composed of subunits A and B; disulfide-linked. BTD-2 is a cyclic homodimer composed of two subunits B; disulfide-linked.</text>
</comment>
<comment type="PTM">
    <text evidence="4">Forms a cyclic peptide with subunit A (BTD-1), or subunit B (BTD-2). An additional intersubunit disulfide bond is formed.</text>
</comment>
<comment type="mass spectrometry" mass="2055.69" method="MALDI" evidence="4">
    <text>BTD-1, heterodimer, cyclized.</text>
</comment>
<comment type="mass spectrometry" mass="2062.72" method="MALDI" evidence="4">
    <text>BTD-2, homodimer, cyclized.</text>
</comment>
<comment type="similarity">
    <text evidence="2">Belongs to the alpha-defensin family. Theta subfamily.</text>
</comment>
<keyword id="KW-0002">3D-structure</keyword>
<keyword id="KW-0044">Antibiotic</keyword>
<keyword id="KW-0929">Antimicrobial</keyword>
<keyword id="KW-0211">Defensin</keyword>
<keyword id="KW-0903">Direct protein sequencing</keyword>
<keyword id="KW-1015">Disulfide bond</keyword>
<keyword id="KW-0295">Fungicide</keyword>
<keyword id="KW-1185">Reference proteome</keyword>
<keyword id="KW-0732">Signal</keyword>
<gene>
    <name type="primary">BTDB</name>
</gene>
<reference evidence="7 8" key="1">
    <citation type="journal article" date="2008" name="Infect. Immun.">
        <title>Isolation, synthesis, and antimicrobial activities of naturally occurring theta-defensin isoforms from baboon leukocytes.</title>
        <authorList>
            <person name="Garcia A.E."/>
            <person name="Oesapay G."/>
            <person name="Tran P.A."/>
            <person name="Yuan J."/>
            <person name="Selsted M.E."/>
        </authorList>
    </citation>
    <scope>NUCLEOTIDE SEQUENCE [MRNA]</scope>
    <scope>PROTEIN SEQUENCE OF 65-73</scope>
    <scope>IDENTIFICATION OF BTD-1 AND BTD-2</scope>
    <scope>SYNTHESIS OF BTD-1 AND BTD-2</scope>
    <scope>FUNCTION</scope>
    <scope>SUBUNIT</scope>
    <scope>MASS SPECTROMETRY</scope>
    <source>
        <tissue evidence="4">Bone marrow</tissue>
        <tissue evidence="4">Leukocyte</tissue>
    </source>
</reference>
<reference key="2">
    <citation type="journal article" date="2012" name="Biochemistry">
        <title>Structural characterization of the cyclic cystine ladder motif of theta-defensins.</title>
        <authorList>
            <person name="Conibear A.C."/>
            <person name="Rosengren K.J."/>
            <person name="Harvey P.J."/>
            <person name="Craik D.J."/>
        </authorList>
    </citation>
    <scope>STRUCTURE BY NMR OF 65-73</scope>
    <scope>SYNTHESIS OF BTD-2</scope>
    <scope>DISULFIDE BOND</scope>
    <scope>SUBUNIT</scope>
</reference>
<feature type="signal peptide" evidence="2">
    <location>
        <begin position="1"/>
        <end position="22"/>
    </location>
</feature>
<feature type="propeptide" id="PRO_0000364010" evidence="4">
    <location>
        <begin position="23"/>
        <end position="64"/>
    </location>
</feature>
<feature type="peptide" id="PRO_0000364011" description="Theta defensin subunit B">
    <location>
        <begin position="65"/>
        <end position="73"/>
    </location>
</feature>
<feature type="propeptide" id="PRO_0000364012" evidence="4">
    <location>
        <begin position="74"/>
        <end position="76"/>
    </location>
</feature>
<feature type="region of interest" description="Disordered" evidence="3">
    <location>
        <begin position="24"/>
        <end position="54"/>
    </location>
</feature>
<feature type="compositionally biased region" description="Low complexity" evidence="3">
    <location>
        <begin position="30"/>
        <end position="44"/>
    </location>
</feature>
<feature type="disulfide bond" description="Interchain (with C-66 in subunit A); in form BTD-1" evidence="1">
    <location>
        <position position="66"/>
    </location>
</feature>
<feature type="disulfide bond" description="Interchain (with C-66 in subunit B); in form BTD-2" evidence="5">
    <location>
        <position position="66"/>
    </location>
</feature>
<feature type="disulfide bond" evidence="5">
    <location>
        <begin position="68"/>
        <end position="73"/>
    </location>
</feature>
<feature type="cross-link" description="Cyclopeptide (Arg-Cys) (interchain with C-73 in subunit A); in form BTD-1">
    <location>
        <position position="65"/>
    </location>
</feature>
<feature type="cross-link" description="Cyclopeptide (Arg-Cys) (interchain with C-73 in subunit B); in form BTD-2">
    <location>
        <position position="65"/>
    </location>
</feature>
<feature type="cross-link" description="Cyclopeptide (Cys-Arg) (interchain with R-65 in subunit A); in form BTD-1">
    <location>
        <position position="73"/>
    </location>
</feature>
<feature type="cross-link" description="Cyclopeptide (Cys-Arg) (interchain with R-65 in subunit B); in form BTD-2">
    <location>
        <position position="73"/>
    </location>
</feature>